<comment type="function">
    <text evidence="1">Catalyzes the condensation of carbamoyl phosphate and aspartate to form carbamoyl aspartate and inorganic phosphate, the committed step in the de novo pyrimidine nucleotide biosynthesis pathway.</text>
</comment>
<comment type="catalytic activity">
    <reaction evidence="1">
        <text>carbamoyl phosphate + L-aspartate = N-carbamoyl-L-aspartate + phosphate + H(+)</text>
        <dbReference type="Rhea" id="RHEA:20013"/>
        <dbReference type="ChEBI" id="CHEBI:15378"/>
        <dbReference type="ChEBI" id="CHEBI:29991"/>
        <dbReference type="ChEBI" id="CHEBI:32814"/>
        <dbReference type="ChEBI" id="CHEBI:43474"/>
        <dbReference type="ChEBI" id="CHEBI:58228"/>
        <dbReference type="EC" id="2.1.3.2"/>
    </reaction>
</comment>
<comment type="pathway">
    <text evidence="1">Pyrimidine metabolism; UMP biosynthesis via de novo pathway; (S)-dihydroorotate from bicarbonate: step 2/3.</text>
</comment>
<comment type="subunit">
    <text evidence="1">Heterododecamer (2C3:3R2) of six catalytic PyrB chains organized as two trimers (C3), and six regulatory PyrI chains organized as three dimers (R2).</text>
</comment>
<comment type="similarity">
    <text evidence="1">Belongs to the aspartate/ornithine carbamoyltransferase superfamily. ATCase family.</text>
</comment>
<protein>
    <recommendedName>
        <fullName evidence="1">Aspartate carbamoyltransferase catalytic subunit</fullName>
        <ecNumber evidence="1">2.1.3.2</ecNumber>
    </recommendedName>
    <alternativeName>
        <fullName evidence="1">Aspartate transcarbamylase</fullName>
        <shortName evidence="1">ATCase</shortName>
    </alternativeName>
</protein>
<proteinExistence type="inferred from homology"/>
<reference key="1">
    <citation type="journal article" date="2010" name="Genome Biol.">
        <title>Structure and dynamics of the pan-genome of Streptococcus pneumoniae and closely related species.</title>
        <authorList>
            <person name="Donati C."/>
            <person name="Hiller N.L."/>
            <person name="Tettelin H."/>
            <person name="Muzzi A."/>
            <person name="Croucher N.J."/>
            <person name="Angiuoli S.V."/>
            <person name="Oggioni M."/>
            <person name="Dunning Hotopp J.C."/>
            <person name="Hu F.Z."/>
            <person name="Riley D.R."/>
            <person name="Covacci A."/>
            <person name="Mitchell T.J."/>
            <person name="Bentley S.D."/>
            <person name="Kilian M."/>
            <person name="Ehrlich G.D."/>
            <person name="Rappuoli R."/>
            <person name="Moxon E.R."/>
            <person name="Masignani V."/>
        </authorList>
    </citation>
    <scope>NUCLEOTIDE SEQUENCE [LARGE SCALE GENOMIC DNA]</scope>
    <source>
        <strain>JJA</strain>
    </source>
</reference>
<sequence>MSENQQALNHVVSMEDLTVDQVMKLIKRGIEFKNGAQLPYEDHPIVSNLFFEDSTRTHKSFEVAEIKLGLERLDFDVKTSSVNKGETLYDTILTLSALGVDVCVIRHPEVDYYRELIASPTITTSIINGGDGSGQHPSQSLLDLMTIYEEFGHFEGLKVAIAGDLDHSRVAKSNMQILKRLGAELFFAGPEEWRSQEFADYGQFVTIDEIIDQVDVMMFLRVQHERHDSGAVFSKEDYHAQHGLTQERYDRLKETAILMHPAPINRDVEIADHLVEAPKSRIVQQMTNGVFVRMAILESVLASRNAN</sequence>
<feature type="chain" id="PRO_1000191914" description="Aspartate carbamoyltransferase catalytic subunit">
    <location>
        <begin position="1"/>
        <end position="307"/>
    </location>
</feature>
<feature type="binding site" evidence="1">
    <location>
        <position position="56"/>
    </location>
    <ligand>
        <name>carbamoyl phosphate</name>
        <dbReference type="ChEBI" id="CHEBI:58228"/>
    </ligand>
</feature>
<feature type="binding site" evidence="1">
    <location>
        <position position="57"/>
    </location>
    <ligand>
        <name>carbamoyl phosphate</name>
        <dbReference type="ChEBI" id="CHEBI:58228"/>
    </ligand>
</feature>
<feature type="binding site" evidence="1">
    <location>
        <position position="84"/>
    </location>
    <ligand>
        <name>L-aspartate</name>
        <dbReference type="ChEBI" id="CHEBI:29991"/>
    </ligand>
</feature>
<feature type="binding site" evidence="1">
    <location>
        <position position="106"/>
    </location>
    <ligand>
        <name>carbamoyl phosphate</name>
        <dbReference type="ChEBI" id="CHEBI:58228"/>
    </ligand>
</feature>
<feature type="binding site" evidence="1">
    <location>
        <position position="136"/>
    </location>
    <ligand>
        <name>carbamoyl phosphate</name>
        <dbReference type="ChEBI" id="CHEBI:58228"/>
    </ligand>
</feature>
<feature type="binding site" evidence="1">
    <location>
        <position position="139"/>
    </location>
    <ligand>
        <name>carbamoyl phosphate</name>
        <dbReference type="ChEBI" id="CHEBI:58228"/>
    </ligand>
</feature>
<feature type="binding site" evidence="1">
    <location>
        <position position="169"/>
    </location>
    <ligand>
        <name>L-aspartate</name>
        <dbReference type="ChEBI" id="CHEBI:29991"/>
    </ligand>
</feature>
<feature type="binding site" evidence="1">
    <location>
        <position position="221"/>
    </location>
    <ligand>
        <name>L-aspartate</name>
        <dbReference type="ChEBI" id="CHEBI:29991"/>
    </ligand>
</feature>
<feature type="binding site" evidence="1">
    <location>
        <position position="262"/>
    </location>
    <ligand>
        <name>carbamoyl phosphate</name>
        <dbReference type="ChEBI" id="CHEBI:58228"/>
    </ligand>
</feature>
<feature type="binding site" evidence="1">
    <location>
        <position position="263"/>
    </location>
    <ligand>
        <name>carbamoyl phosphate</name>
        <dbReference type="ChEBI" id="CHEBI:58228"/>
    </ligand>
</feature>
<name>PYRB_STRZJ</name>
<accession>C1CEN1</accession>
<evidence type="ECO:0000255" key="1">
    <source>
        <dbReference type="HAMAP-Rule" id="MF_00001"/>
    </source>
</evidence>
<gene>
    <name evidence="1" type="primary">pyrB</name>
    <name type="ordered locus">SPJ_1191</name>
</gene>
<organism>
    <name type="scientific">Streptococcus pneumoniae (strain JJA)</name>
    <dbReference type="NCBI Taxonomy" id="488222"/>
    <lineage>
        <taxon>Bacteria</taxon>
        <taxon>Bacillati</taxon>
        <taxon>Bacillota</taxon>
        <taxon>Bacilli</taxon>
        <taxon>Lactobacillales</taxon>
        <taxon>Streptococcaceae</taxon>
        <taxon>Streptococcus</taxon>
    </lineage>
</organism>
<keyword id="KW-0665">Pyrimidine biosynthesis</keyword>
<keyword id="KW-0808">Transferase</keyword>
<dbReference type="EC" id="2.1.3.2" evidence="1"/>
<dbReference type="EMBL" id="CP000919">
    <property type="protein sequence ID" value="ACO18278.1"/>
    <property type="molecule type" value="Genomic_DNA"/>
</dbReference>
<dbReference type="RefSeq" id="WP_001293838.1">
    <property type="nucleotide sequence ID" value="NC_012466.1"/>
</dbReference>
<dbReference type="SMR" id="C1CEN1"/>
<dbReference type="KEGG" id="sjj:SPJ_1191"/>
<dbReference type="HOGENOM" id="CLU_043846_2_1_9"/>
<dbReference type="UniPathway" id="UPA00070">
    <property type="reaction ID" value="UER00116"/>
</dbReference>
<dbReference type="Proteomes" id="UP000002206">
    <property type="component" value="Chromosome"/>
</dbReference>
<dbReference type="GO" id="GO:0005829">
    <property type="term" value="C:cytosol"/>
    <property type="evidence" value="ECO:0007669"/>
    <property type="project" value="TreeGrafter"/>
</dbReference>
<dbReference type="GO" id="GO:0016597">
    <property type="term" value="F:amino acid binding"/>
    <property type="evidence" value="ECO:0007669"/>
    <property type="project" value="InterPro"/>
</dbReference>
<dbReference type="GO" id="GO:0004070">
    <property type="term" value="F:aspartate carbamoyltransferase activity"/>
    <property type="evidence" value="ECO:0007669"/>
    <property type="project" value="UniProtKB-UniRule"/>
</dbReference>
<dbReference type="GO" id="GO:0006207">
    <property type="term" value="P:'de novo' pyrimidine nucleobase biosynthetic process"/>
    <property type="evidence" value="ECO:0007669"/>
    <property type="project" value="InterPro"/>
</dbReference>
<dbReference type="GO" id="GO:0044205">
    <property type="term" value="P:'de novo' UMP biosynthetic process"/>
    <property type="evidence" value="ECO:0007669"/>
    <property type="project" value="UniProtKB-UniRule"/>
</dbReference>
<dbReference type="GO" id="GO:0006520">
    <property type="term" value="P:amino acid metabolic process"/>
    <property type="evidence" value="ECO:0007669"/>
    <property type="project" value="InterPro"/>
</dbReference>
<dbReference type="FunFam" id="3.40.50.1370:FF:000011">
    <property type="entry name" value="Aspartate carbamoyltransferase"/>
    <property type="match status" value="1"/>
</dbReference>
<dbReference type="Gene3D" id="3.40.50.1370">
    <property type="entry name" value="Aspartate/ornithine carbamoyltransferase"/>
    <property type="match status" value="2"/>
</dbReference>
<dbReference type="HAMAP" id="MF_00001">
    <property type="entry name" value="Asp_carb_tr"/>
    <property type="match status" value="1"/>
</dbReference>
<dbReference type="InterPro" id="IPR006132">
    <property type="entry name" value="Asp/Orn_carbamoyltranf_P-bd"/>
</dbReference>
<dbReference type="InterPro" id="IPR006130">
    <property type="entry name" value="Asp/Orn_carbamoylTrfase"/>
</dbReference>
<dbReference type="InterPro" id="IPR036901">
    <property type="entry name" value="Asp/Orn_carbamoylTrfase_sf"/>
</dbReference>
<dbReference type="InterPro" id="IPR002082">
    <property type="entry name" value="Asp_carbamoyltransf"/>
</dbReference>
<dbReference type="InterPro" id="IPR006131">
    <property type="entry name" value="Asp_carbamoyltransf_Asp/Orn-bd"/>
</dbReference>
<dbReference type="NCBIfam" id="TIGR00670">
    <property type="entry name" value="asp_carb_tr"/>
    <property type="match status" value="1"/>
</dbReference>
<dbReference type="NCBIfam" id="NF002032">
    <property type="entry name" value="PRK00856.1"/>
    <property type="match status" value="1"/>
</dbReference>
<dbReference type="PANTHER" id="PTHR45753:SF6">
    <property type="entry name" value="ASPARTATE CARBAMOYLTRANSFERASE"/>
    <property type="match status" value="1"/>
</dbReference>
<dbReference type="PANTHER" id="PTHR45753">
    <property type="entry name" value="ORNITHINE CARBAMOYLTRANSFERASE, MITOCHONDRIAL"/>
    <property type="match status" value="1"/>
</dbReference>
<dbReference type="Pfam" id="PF00185">
    <property type="entry name" value="OTCace"/>
    <property type="match status" value="1"/>
</dbReference>
<dbReference type="Pfam" id="PF02729">
    <property type="entry name" value="OTCace_N"/>
    <property type="match status" value="1"/>
</dbReference>
<dbReference type="PRINTS" id="PR00100">
    <property type="entry name" value="AOTCASE"/>
</dbReference>
<dbReference type="PRINTS" id="PR00101">
    <property type="entry name" value="ATCASE"/>
</dbReference>
<dbReference type="SUPFAM" id="SSF53671">
    <property type="entry name" value="Aspartate/ornithine carbamoyltransferase"/>
    <property type="match status" value="1"/>
</dbReference>
<dbReference type="PROSITE" id="PS00097">
    <property type="entry name" value="CARBAMOYLTRANSFERASE"/>
    <property type="match status" value="1"/>
</dbReference>